<reference key="1">
    <citation type="journal article" date="2008" name="J. Bacteriol.">
        <title>Genome sequence of the fish pathogen Renibacterium salmoninarum suggests reductive evolution away from an environmental Arthrobacter ancestor.</title>
        <authorList>
            <person name="Wiens G.D."/>
            <person name="Rockey D.D."/>
            <person name="Wu Z."/>
            <person name="Chang J."/>
            <person name="Levy R."/>
            <person name="Crane S."/>
            <person name="Chen D.S."/>
            <person name="Capri G.R."/>
            <person name="Burnett J.R."/>
            <person name="Sudheesh P.S."/>
            <person name="Schipma M.J."/>
            <person name="Burd H."/>
            <person name="Bhattacharyya A."/>
            <person name="Rhodes L.D."/>
            <person name="Kaul R."/>
            <person name="Strom M.S."/>
        </authorList>
    </citation>
    <scope>NUCLEOTIDE SEQUENCE [LARGE SCALE GENOMIC DNA]</scope>
    <source>
        <strain>ATCC 33209 / DSM 20767 / JCM 11484 / NBRC 15589 / NCIMB 2235</strain>
    </source>
</reference>
<comment type="similarity">
    <text evidence="1">Belongs to the bacterial ribosomal protein bL33 family.</text>
</comment>
<keyword id="KW-1185">Reference proteome</keyword>
<keyword id="KW-0687">Ribonucleoprotein</keyword>
<keyword id="KW-0689">Ribosomal protein</keyword>
<protein>
    <recommendedName>
        <fullName evidence="1">Large ribosomal subunit protein bL33</fullName>
    </recommendedName>
    <alternativeName>
        <fullName evidence="2">50S ribosomal protein L33</fullName>
    </alternativeName>
</protein>
<name>RL33_RENSM</name>
<sequence>MAKDKDVRPIIKLKSTAGTGHTYVTRKNRRNDPDRLVLKKYDPRIRQHVEFREER</sequence>
<accession>A9WTS8</accession>
<dbReference type="EMBL" id="CP000910">
    <property type="protein sequence ID" value="ABY24599.1"/>
    <property type="molecule type" value="Genomic_DNA"/>
</dbReference>
<dbReference type="RefSeq" id="WP_012246249.1">
    <property type="nucleotide sequence ID" value="NC_010168.1"/>
</dbReference>
<dbReference type="SMR" id="A9WTS8"/>
<dbReference type="STRING" id="288705.RSal33209_2875"/>
<dbReference type="KEGG" id="rsa:RSal33209_2875"/>
<dbReference type="eggNOG" id="COG0267">
    <property type="taxonomic scope" value="Bacteria"/>
</dbReference>
<dbReference type="HOGENOM" id="CLU_190949_1_1_11"/>
<dbReference type="Proteomes" id="UP000002007">
    <property type="component" value="Chromosome"/>
</dbReference>
<dbReference type="GO" id="GO:0022625">
    <property type="term" value="C:cytosolic large ribosomal subunit"/>
    <property type="evidence" value="ECO:0007669"/>
    <property type="project" value="TreeGrafter"/>
</dbReference>
<dbReference type="GO" id="GO:0003735">
    <property type="term" value="F:structural constituent of ribosome"/>
    <property type="evidence" value="ECO:0007669"/>
    <property type="project" value="InterPro"/>
</dbReference>
<dbReference type="GO" id="GO:0006412">
    <property type="term" value="P:translation"/>
    <property type="evidence" value="ECO:0007669"/>
    <property type="project" value="UniProtKB-UniRule"/>
</dbReference>
<dbReference type="Gene3D" id="2.20.28.120">
    <property type="entry name" value="Ribosomal protein L33"/>
    <property type="match status" value="1"/>
</dbReference>
<dbReference type="HAMAP" id="MF_00294">
    <property type="entry name" value="Ribosomal_bL33"/>
    <property type="match status" value="1"/>
</dbReference>
<dbReference type="InterPro" id="IPR001705">
    <property type="entry name" value="Ribosomal_bL33"/>
</dbReference>
<dbReference type="InterPro" id="IPR018264">
    <property type="entry name" value="Ribosomal_bL33_CS"/>
</dbReference>
<dbReference type="InterPro" id="IPR038584">
    <property type="entry name" value="Ribosomal_bL33_sf"/>
</dbReference>
<dbReference type="InterPro" id="IPR011332">
    <property type="entry name" value="Ribosomal_zn-bd"/>
</dbReference>
<dbReference type="NCBIfam" id="NF001860">
    <property type="entry name" value="PRK00595.1"/>
    <property type="match status" value="1"/>
</dbReference>
<dbReference type="NCBIfam" id="TIGR01023">
    <property type="entry name" value="rpmG_bact"/>
    <property type="match status" value="1"/>
</dbReference>
<dbReference type="PANTHER" id="PTHR15238">
    <property type="entry name" value="54S RIBOSOMAL PROTEIN L39, MITOCHONDRIAL"/>
    <property type="match status" value="1"/>
</dbReference>
<dbReference type="PANTHER" id="PTHR15238:SF1">
    <property type="entry name" value="LARGE RIBOSOMAL SUBUNIT PROTEIN BL33M"/>
    <property type="match status" value="1"/>
</dbReference>
<dbReference type="Pfam" id="PF00471">
    <property type="entry name" value="Ribosomal_L33"/>
    <property type="match status" value="1"/>
</dbReference>
<dbReference type="SUPFAM" id="SSF57829">
    <property type="entry name" value="Zn-binding ribosomal proteins"/>
    <property type="match status" value="1"/>
</dbReference>
<dbReference type="PROSITE" id="PS00582">
    <property type="entry name" value="RIBOSOMAL_L33"/>
    <property type="match status" value="1"/>
</dbReference>
<evidence type="ECO:0000255" key="1">
    <source>
        <dbReference type="HAMAP-Rule" id="MF_00294"/>
    </source>
</evidence>
<evidence type="ECO:0000305" key="2"/>
<proteinExistence type="inferred from homology"/>
<gene>
    <name evidence="1" type="primary">rpmG</name>
    <name type="ordered locus">RSal33209_2875</name>
</gene>
<organism>
    <name type="scientific">Renibacterium salmoninarum (strain ATCC 33209 / DSM 20767 / JCM 11484 / NBRC 15589 / NCIMB 2235)</name>
    <dbReference type="NCBI Taxonomy" id="288705"/>
    <lineage>
        <taxon>Bacteria</taxon>
        <taxon>Bacillati</taxon>
        <taxon>Actinomycetota</taxon>
        <taxon>Actinomycetes</taxon>
        <taxon>Micrococcales</taxon>
        <taxon>Micrococcaceae</taxon>
        <taxon>Renibacterium</taxon>
    </lineage>
</organism>
<feature type="chain" id="PRO_1000078919" description="Large ribosomal subunit protein bL33">
    <location>
        <begin position="1"/>
        <end position="55"/>
    </location>
</feature>